<evidence type="ECO:0000255" key="1">
    <source>
        <dbReference type="HAMAP-Rule" id="MF_00051"/>
    </source>
</evidence>
<dbReference type="EC" id="2.1.2.1" evidence="1"/>
<dbReference type="EMBL" id="CP000503">
    <property type="protein sequence ID" value="ABM24075.1"/>
    <property type="molecule type" value="Genomic_DNA"/>
</dbReference>
<dbReference type="RefSeq" id="WP_011788583.1">
    <property type="nucleotide sequence ID" value="NC_008750.1"/>
</dbReference>
<dbReference type="SMR" id="A1RHD0"/>
<dbReference type="KEGG" id="shw:Sputw3181_1232"/>
<dbReference type="HOGENOM" id="CLU_022477_2_1_6"/>
<dbReference type="UniPathway" id="UPA00193"/>
<dbReference type="UniPathway" id="UPA00288">
    <property type="reaction ID" value="UER01023"/>
</dbReference>
<dbReference type="Proteomes" id="UP000002597">
    <property type="component" value="Chromosome"/>
</dbReference>
<dbReference type="GO" id="GO:0005829">
    <property type="term" value="C:cytosol"/>
    <property type="evidence" value="ECO:0007669"/>
    <property type="project" value="TreeGrafter"/>
</dbReference>
<dbReference type="GO" id="GO:0004372">
    <property type="term" value="F:glycine hydroxymethyltransferase activity"/>
    <property type="evidence" value="ECO:0007669"/>
    <property type="project" value="UniProtKB-UniRule"/>
</dbReference>
<dbReference type="GO" id="GO:0030170">
    <property type="term" value="F:pyridoxal phosphate binding"/>
    <property type="evidence" value="ECO:0007669"/>
    <property type="project" value="UniProtKB-UniRule"/>
</dbReference>
<dbReference type="GO" id="GO:0019264">
    <property type="term" value="P:glycine biosynthetic process from serine"/>
    <property type="evidence" value="ECO:0007669"/>
    <property type="project" value="UniProtKB-UniRule"/>
</dbReference>
<dbReference type="GO" id="GO:0035999">
    <property type="term" value="P:tetrahydrofolate interconversion"/>
    <property type="evidence" value="ECO:0007669"/>
    <property type="project" value="UniProtKB-UniRule"/>
</dbReference>
<dbReference type="CDD" id="cd00378">
    <property type="entry name" value="SHMT"/>
    <property type="match status" value="1"/>
</dbReference>
<dbReference type="FunFam" id="3.40.640.10:FF:000001">
    <property type="entry name" value="Serine hydroxymethyltransferase"/>
    <property type="match status" value="1"/>
</dbReference>
<dbReference type="FunFam" id="3.90.1150.10:FF:000003">
    <property type="entry name" value="Serine hydroxymethyltransferase"/>
    <property type="match status" value="1"/>
</dbReference>
<dbReference type="Gene3D" id="3.90.1150.10">
    <property type="entry name" value="Aspartate Aminotransferase, domain 1"/>
    <property type="match status" value="1"/>
</dbReference>
<dbReference type="Gene3D" id="3.40.640.10">
    <property type="entry name" value="Type I PLP-dependent aspartate aminotransferase-like (Major domain)"/>
    <property type="match status" value="1"/>
</dbReference>
<dbReference type="HAMAP" id="MF_00051">
    <property type="entry name" value="SHMT"/>
    <property type="match status" value="1"/>
</dbReference>
<dbReference type="InterPro" id="IPR015424">
    <property type="entry name" value="PyrdxlP-dep_Trfase"/>
</dbReference>
<dbReference type="InterPro" id="IPR015421">
    <property type="entry name" value="PyrdxlP-dep_Trfase_major"/>
</dbReference>
<dbReference type="InterPro" id="IPR015422">
    <property type="entry name" value="PyrdxlP-dep_Trfase_small"/>
</dbReference>
<dbReference type="InterPro" id="IPR001085">
    <property type="entry name" value="Ser_HO-MeTrfase"/>
</dbReference>
<dbReference type="InterPro" id="IPR049943">
    <property type="entry name" value="Ser_HO-MeTrfase-like"/>
</dbReference>
<dbReference type="InterPro" id="IPR019798">
    <property type="entry name" value="Ser_HO-MeTrfase_PLP_BS"/>
</dbReference>
<dbReference type="InterPro" id="IPR039429">
    <property type="entry name" value="SHMT-like_dom"/>
</dbReference>
<dbReference type="NCBIfam" id="NF000586">
    <property type="entry name" value="PRK00011.1"/>
    <property type="match status" value="1"/>
</dbReference>
<dbReference type="PANTHER" id="PTHR11680">
    <property type="entry name" value="SERINE HYDROXYMETHYLTRANSFERASE"/>
    <property type="match status" value="1"/>
</dbReference>
<dbReference type="PANTHER" id="PTHR11680:SF50">
    <property type="entry name" value="SERINE HYDROXYMETHYLTRANSFERASE"/>
    <property type="match status" value="1"/>
</dbReference>
<dbReference type="Pfam" id="PF00464">
    <property type="entry name" value="SHMT"/>
    <property type="match status" value="1"/>
</dbReference>
<dbReference type="PIRSF" id="PIRSF000412">
    <property type="entry name" value="SHMT"/>
    <property type="match status" value="1"/>
</dbReference>
<dbReference type="SUPFAM" id="SSF53383">
    <property type="entry name" value="PLP-dependent transferases"/>
    <property type="match status" value="1"/>
</dbReference>
<dbReference type="PROSITE" id="PS00096">
    <property type="entry name" value="SHMT"/>
    <property type="match status" value="1"/>
</dbReference>
<name>GLYA_SHESW</name>
<protein>
    <recommendedName>
        <fullName evidence="1">Serine hydroxymethyltransferase</fullName>
        <shortName evidence="1">SHMT</shortName>
        <shortName evidence="1">Serine methylase</shortName>
        <ecNumber evidence="1">2.1.2.1</ecNumber>
    </recommendedName>
</protein>
<reference key="1">
    <citation type="submission" date="2006-12" db="EMBL/GenBank/DDBJ databases">
        <title>Complete sequence of Shewanella sp. W3-18-1.</title>
        <authorList>
            <consortium name="US DOE Joint Genome Institute"/>
            <person name="Copeland A."/>
            <person name="Lucas S."/>
            <person name="Lapidus A."/>
            <person name="Barry K."/>
            <person name="Detter J.C."/>
            <person name="Glavina del Rio T."/>
            <person name="Hammon N."/>
            <person name="Israni S."/>
            <person name="Dalin E."/>
            <person name="Tice H."/>
            <person name="Pitluck S."/>
            <person name="Chain P."/>
            <person name="Malfatti S."/>
            <person name="Shin M."/>
            <person name="Vergez L."/>
            <person name="Schmutz J."/>
            <person name="Larimer F."/>
            <person name="Land M."/>
            <person name="Hauser L."/>
            <person name="Kyrpides N."/>
            <person name="Lykidis A."/>
            <person name="Tiedje J."/>
            <person name="Richardson P."/>
        </authorList>
    </citation>
    <scope>NUCLEOTIDE SEQUENCE [LARGE SCALE GENOMIC DNA]</scope>
    <source>
        <strain>W3-18-1</strain>
    </source>
</reference>
<feature type="chain" id="PRO_1000006322" description="Serine hydroxymethyltransferase">
    <location>
        <begin position="1"/>
        <end position="417"/>
    </location>
</feature>
<feature type="binding site" evidence="1">
    <location>
        <position position="121"/>
    </location>
    <ligand>
        <name>(6S)-5,6,7,8-tetrahydrofolate</name>
        <dbReference type="ChEBI" id="CHEBI:57453"/>
    </ligand>
</feature>
<feature type="binding site" evidence="1">
    <location>
        <begin position="125"/>
        <end position="127"/>
    </location>
    <ligand>
        <name>(6S)-5,6,7,8-tetrahydrofolate</name>
        <dbReference type="ChEBI" id="CHEBI:57453"/>
    </ligand>
</feature>
<feature type="binding site" evidence="1">
    <location>
        <begin position="355"/>
        <end position="357"/>
    </location>
    <ligand>
        <name>(6S)-5,6,7,8-tetrahydrofolate</name>
        <dbReference type="ChEBI" id="CHEBI:57453"/>
    </ligand>
</feature>
<feature type="site" description="Plays an important role in substrate specificity" evidence="1">
    <location>
        <position position="228"/>
    </location>
</feature>
<feature type="modified residue" description="N6-(pyridoxal phosphate)lysine" evidence="1">
    <location>
        <position position="229"/>
    </location>
</feature>
<sequence>MLKKDMNIADYDPELFNAIQNETLRQEEHIELIASENYTSPRVMEAQGSQLTNKYAEGYPGKRYYGGCEYVDVVETLAIERAKQLFGATYANVQPHSGSQANSAVYMALLKPGDTVLGMNLAHGGHLTHGSPVNFSGKLYNIIPYGIDESGKIDYEEMERIAIEHKPKMMIGGFSAYSGIVDWAKMREIADKIGAYLFVDMAHVAGLIAAGVYPNPVPHAHVVTSTTHKTLAGPRGGVILSAADDEDLYKKLNSAVFPGGQGGPLMHVIAGKAVAFKEALEPEFKVYQQQVVNNAKAMVEVFLERGYKIVSGGTSNHLMLVDLIGRDLTGKEADAALGSANITVNKNSVPNDPRSPFVTSGVRIGTPAITRRGFKEAESKELTGWICDILDDANNPAVIERVKGQVLALCARFPVYG</sequence>
<gene>
    <name evidence="1" type="primary">glyA</name>
    <name type="ordered locus">Sputw3181_1232</name>
</gene>
<proteinExistence type="inferred from homology"/>
<comment type="function">
    <text evidence="1">Catalyzes the reversible interconversion of serine and glycine with tetrahydrofolate (THF) serving as the one-carbon carrier. This reaction serves as the major source of one-carbon groups required for the biosynthesis of purines, thymidylate, methionine, and other important biomolecules. Also exhibits THF-independent aldolase activity toward beta-hydroxyamino acids, producing glycine and aldehydes, via a retro-aldol mechanism.</text>
</comment>
<comment type="catalytic activity">
    <reaction evidence="1">
        <text>(6R)-5,10-methylene-5,6,7,8-tetrahydrofolate + glycine + H2O = (6S)-5,6,7,8-tetrahydrofolate + L-serine</text>
        <dbReference type="Rhea" id="RHEA:15481"/>
        <dbReference type="ChEBI" id="CHEBI:15377"/>
        <dbReference type="ChEBI" id="CHEBI:15636"/>
        <dbReference type="ChEBI" id="CHEBI:33384"/>
        <dbReference type="ChEBI" id="CHEBI:57305"/>
        <dbReference type="ChEBI" id="CHEBI:57453"/>
        <dbReference type="EC" id="2.1.2.1"/>
    </reaction>
</comment>
<comment type="cofactor">
    <cofactor evidence="1">
        <name>pyridoxal 5'-phosphate</name>
        <dbReference type="ChEBI" id="CHEBI:597326"/>
    </cofactor>
</comment>
<comment type="pathway">
    <text evidence="1">One-carbon metabolism; tetrahydrofolate interconversion.</text>
</comment>
<comment type="pathway">
    <text evidence="1">Amino-acid biosynthesis; glycine biosynthesis; glycine from L-serine: step 1/1.</text>
</comment>
<comment type="subunit">
    <text evidence="1">Homodimer.</text>
</comment>
<comment type="subcellular location">
    <subcellularLocation>
        <location evidence="1">Cytoplasm</location>
    </subcellularLocation>
</comment>
<comment type="similarity">
    <text evidence="1">Belongs to the SHMT family.</text>
</comment>
<organism>
    <name type="scientific">Shewanella sp. (strain W3-18-1)</name>
    <dbReference type="NCBI Taxonomy" id="351745"/>
    <lineage>
        <taxon>Bacteria</taxon>
        <taxon>Pseudomonadati</taxon>
        <taxon>Pseudomonadota</taxon>
        <taxon>Gammaproteobacteria</taxon>
        <taxon>Alteromonadales</taxon>
        <taxon>Shewanellaceae</taxon>
        <taxon>Shewanella</taxon>
    </lineage>
</organism>
<accession>A1RHD0</accession>
<keyword id="KW-0028">Amino-acid biosynthesis</keyword>
<keyword id="KW-0963">Cytoplasm</keyword>
<keyword id="KW-0554">One-carbon metabolism</keyword>
<keyword id="KW-0663">Pyridoxal phosphate</keyword>
<keyword id="KW-0808">Transferase</keyword>